<accession>Q99L04</accession>
<accession>Q3THW0</accession>
<accession>Q9D148</accession>
<gene>
    <name evidence="4" type="primary">Dhrs1</name>
    <name type="synonym">D14ertd484e</name>
</gene>
<reference key="1">
    <citation type="journal article" date="2005" name="Science">
        <title>The transcriptional landscape of the mammalian genome.</title>
        <authorList>
            <person name="Carninci P."/>
            <person name="Kasukawa T."/>
            <person name="Katayama S."/>
            <person name="Gough J."/>
            <person name="Frith M.C."/>
            <person name="Maeda N."/>
            <person name="Oyama R."/>
            <person name="Ravasi T."/>
            <person name="Lenhard B."/>
            <person name="Wells C."/>
            <person name="Kodzius R."/>
            <person name="Shimokawa K."/>
            <person name="Bajic V.B."/>
            <person name="Brenner S.E."/>
            <person name="Batalov S."/>
            <person name="Forrest A.R."/>
            <person name="Zavolan M."/>
            <person name="Davis M.J."/>
            <person name="Wilming L.G."/>
            <person name="Aidinis V."/>
            <person name="Allen J.E."/>
            <person name="Ambesi-Impiombato A."/>
            <person name="Apweiler R."/>
            <person name="Aturaliya R.N."/>
            <person name="Bailey T.L."/>
            <person name="Bansal M."/>
            <person name="Baxter L."/>
            <person name="Beisel K.W."/>
            <person name="Bersano T."/>
            <person name="Bono H."/>
            <person name="Chalk A.M."/>
            <person name="Chiu K.P."/>
            <person name="Choudhary V."/>
            <person name="Christoffels A."/>
            <person name="Clutterbuck D.R."/>
            <person name="Crowe M.L."/>
            <person name="Dalla E."/>
            <person name="Dalrymple B.P."/>
            <person name="de Bono B."/>
            <person name="Della Gatta G."/>
            <person name="di Bernardo D."/>
            <person name="Down T."/>
            <person name="Engstrom P."/>
            <person name="Fagiolini M."/>
            <person name="Faulkner G."/>
            <person name="Fletcher C.F."/>
            <person name="Fukushima T."/>
            <person name="Furuno M."/>
            <person name="Futaki S."/>
            <person name="Gariboldi M."/>
            <person name="Georgii-Hemming P."/>
            <person name="Gingeras T.R."/>
            <person name="Gojobori T."/>
            <person name="Green R.E."/>
            <person name="Gustincich S."/>
            <person name="Harbers M."/>
            <person name="Hayashi Y."/>
            <person name="Hensch T.K."/>
            <person name="Hirokawa N."/>
            <person name="Hill D."/>
            <person name="Huminiecki L."/>
            <person name="Iacono M."/>
            <person name="Ikeo K."/>
            <person name="Iwama A."/>
            <person name="Ishikawa T."/>
            <person name="Jakt M."/>
            <person name="Kanapin A."/>
            <person name="Katoh M."/>
            <person name="Kawasawa Y."/>
            <person name="Kelso J."/>
            <person name="Kitamura H."/>
            <person name="Kitano H."/>
            <person name="Kollias G."/>
            <person name="Krishnan S.P."/>
            <person name="Kruger A."/>
            <person name="Kummerfeld S.K."/>
            <person name="Kurochkin I.V."/>
            <person name="Lareau L.F."/>
            <person name="Lazarevic D."/>
            <person name="Lipovich L."/>
            <person name="Liu J."/>
            <person name="Liuni S."/>
            <person name="McWilliam S."/>
            <person name="Madan Babu M."/>
            <person name="Madera M."/>
            <person name="Marchionni L."/>
            <person name="Matsuda H."/>
            <person name="Matsuzawa S."/>
            <person name="Miki H."/>
            <person name="Mignone F."/>
            <person name="Miyake S."/>
            <person name="Morris K."/>
            <person name="Mottagui-Tabar S."/>
            <person name="Mulder N."/>
            <person name="Nakano N."/>
            <person name="Nakauchi H."/>
            <person name="Ng P."/>
            <person name="Nilsson R."/>
            <person name="Nishiguchi S."/>
            <person name="Nishikawa S."/>
            <person name="Nori F."/>
            <person name="Ohara O."/>
            <person name="Okazaki Y."/>
            <person name="Orlando V."/>
            <person name="Pang K.C."/>
            <person name="Pavan W.J."/>
            <person name="Pavesi G."/>
            <person name="Pesole G."/>
            <person name="Petrovsky N."/>
            <person name="Piazza S."/>
            <person name="Reed J."/>
            <person name="Reid J.F."/>
            <person name="Ring B.Z."/>
            <person name="Ringwald M."/>
            <person name="Rost B."/>
            <person name="Ruan Y."/>
            <person name="Salzberg S.L."/>
            <person name="Sandelin A."/>
            <person name="Schneider C."/>
            <person name="Schoenbach C."/>
            <person name="Sekiguchi K."/>
            <person name="Semple C.A."/>
            <person name="Seno S."/>
            <person name="Sessa L."/>
            <person name="Sheng Y."/>
            <person name="Shibata Y."/>
            <person name="Shimada H."/>
            <person name="Shimada K."/>
            <person name="Silva D."/>
            <person name="Sinclair B."/>
            <person name="Sperling S."/>
            <person name="Stupka E."/>
            <person name="Sugiura K."/>
            <person name="Sultana R."/>
            <person name="Takenaka Y."/>
            <person name="Taki K."/>
            <person name="Tammoja K."/>
            <person name="Tan S.L."/>
            <person name="Tang S."/>
            <person name="Taylor M.S."/>
            <person name="Tegner J."/>
            <person name="Teichmann S.A."/>
            <person name="Ueda H.R."/>
            <person name="van Nimwegen E."/>
            <person name="Verardo R."/>
            <person name="Wei C.L."/>
            <person name="Yagi K."/>
            <person name="Yamanishi H."/>
            <person name="Zabarovsky E."/>
            <person name="Zhu S."/>
            <person name="Zimmer A."/>
            <person name="Hide W."/>
            <person name="Bult C."/>
            <person name="Grimmond S.M."/>
            <person name="Teasdale R.D."/>
            <person name="Liu E.T."/>
            <person name="Brusic V."/>
            <person name="Quackenbush J."/>
            <person name="Wahlestedt C."/>
            <person name="Mattick J.S."/>
            <person name="Hume D.A."/>
            <person name="Kai C."/>
            <person name="Sasaki D."/>
            <person name="Tomaru Y."/>
            <person name="Fukuda S."/>
            <person name="Kanamori-Katayama M."/>
            <person name="Suzuki M."/>
            <person name="Aoki J."/>
            <person name="Arakawa T."/>
            <person name="Iida J."/>
            <person name="Imamura K."/>
            <person name="Itoh M."/>
            <person name="Kato T."/>
            <person name="Kawaji H."/>
            <person name="Kawagashira N."/>
            <person name="Kawashima T."/>
            <person name="Kojima M."/>
            <person name="Kondo S."/>
            <person name="Konno H."/>
            <person name="Nakano K."/>
            <person name="Ninomiya N."/>
            <person name="Nishio T."/>
            <person name="Okada M."/>
            <person name="Plessy C."/>
            <person name="Shibata K."/>
            <person name="Shiraki T."/>
            <person name="Suzuki S."/>
            <person name="Tagami M."/>
            <person name="Waki K."/>
            <person name="Watahiki A."/>
            <person name="Okamura-Oho Y."/>
            <person name="Suzuki H."/>
            <person name="Kawai J."/>
            <person name="Hayashizaki Y."/>
        </authorList>
    </citation>
    <scope>NUCLEOTIDE SEQUENCE [LARGE SCALE MRNA]</scope>
    <source>
        <strain>C57BL/6J</strain>
        <strain>DBA/2J</strain>
        <tissue>Embryo</tissue>
    </source>
</reference>
<reference key="2">
    <citation type="journal article" date="2004" name="Genome Res.">
        <title>The status, quality, and expansion of the NIH full-length cDNA project: the Mammalian Gene Collection (MGC).</title>
        <authorList>
            <consortium name="The MGC Project Team"/>
        </authorList>
    </citation>
    <scope>NUCLEOTIDE SEQUENCE [LARGE SCALE MRNA]</scope>
    <source>
        <tissue>Mammary tumor</tissue>
    </source>
</reference>
<reference key="3">
    <citation type="journal article" date="2010" name="Cell">
        <title>A tissue-specific atlas of mouse protein phosphorylation and expression.</title>
        <authorList>
            <person name="Huttlin E.L."/>
            <person name="Jedrychowski M.P."/>
            <person name="Elias J.E."/>
            <person name="Goswami T."/>
            <person name="Rad R."/>
            <person name="Beausoleil S.A."/>
            <person name="Villen J."/>
            <person name="Haas W."/>
            <person name="Sowa M.E."/>
            <person name="Gygi S.P."/>
        </authorList>
    </citation>
    <scope>IDENTIFICATION BY MASS SPECTROMETRY [LARGE SCALE ANALYSIS]</scope>
    <source>
        <tissue>Brain</tissue>
        <tissue>Brown adipose tissue</tissue>
        <tissue>Heart</tissue>
        <tissue>Kidney</tissue>
        <tissue>Liver</tissue>
        <tissue>Lung</tissue>
        <tissue>Pancreas</tissue>
        <tissue>Spleen</tissue>
        <tissue>Testis</tissue>
    </source>
</reference>
<reference key="4">
    <citation type="journal article" date="2014" name="Mol. Cell. Proteomics">
        <title>Immunoaffinity enrichment and mass spectrometry analysis of protein methylation.</title>
        <authorList>
            <person name="Guo A."/>
            <person name="Gu H."/>
            <person name="Zhou J."/>
            <person name="Mulhern D."/>
            <person name="Wang Y."/>
            <person name="Lee K.A."/>
            <person name="Yang V."/>
            <person name="Aguiar M."/>
            <person name="Kornhauser J."/>
            <person name="Jia X."/>
            <person name="Ren J."/>
            <person name="Beausoleil S.A."/>
            <person name="Silva J.C."/>
            <person name="Vemulapalli V."/>
            <person name="Bedford M.T."/>
            <person name="Comb M.J."/>
        </authorList>
    </citation>
    <scope>METHYLATION [LARGE SCALE ANALYSIS] AT ARG-21</scope>
    <scope>IDENTIFICATION BY MASS SPECTROMETRY [LARGE SCALE ANALYSIS]</scope>
    <source>
        <tissue>Brain</tissue>
    </source>
</reference>
<feature type="chain" id="PRO_0000054641" description="Dehydrogenase/reductase SDR family member 1">
    <location>
        <begin position="1"/>
        <end position="313"/>
    </location>
</feature>
<feature type="active site" description="Proton acceptor" evidence="2">
    <location>
        <position position="163"/>
    </location>
</feature>
<feature type="binding site" evidence="2">
    <location>
        <position position="19"/>
    </location>
    <ligand>
        <name>NAD(+)</name>
        <dbReference type="ChEBI" id="CHEBI:57540"/>
    </ligand>
</feature>
<feature type="binding site" evidence="2">
    <location>
        <position position="64"/>
    </location>
    <ligand>
        <name>NAD(+)</name>
        <dbReference type="ChEBI" id="CHEBI:57540"/>
    </ligand>
</feature>
<feature type="binding site" evidence="2">
    <location>
        <position position="151"/>
    </location>
    <ligand>
        <name>substrate</name>
    </ligand>
</feature>
<feature type="binding site" evidence="2">
    <location>
        <position position="163"/>
    </location>
    <ligand>
        <name>NAD(+)</name>
        <dbReference type="ChEBI" id="CHEBI:57540"/>
    </ligand>
</feature>
<feature type="binding site" evidence="2">
    <location>
        <position position="167"/>
    </location>
    <ligand>
        <name>NAD(+)</name>
        <dbReference type="ChEBI" id="CHEBI:57540"/>
    </ligand>
</feature>
<feature type="binding site" evidence="2">
    <location>
        <position position="198"/>
    </location>
    <ligand>
        <name>NAD(+)</name>
        <dbReference type="ChEBI" id="CHEBI:57540"/>
    </ligand>
</feature>
<feature type="modified residue" description="Omega-N-methylarginine" evidence="5">
    <location>
        <position position="21"/>
    </location>
</feature>
<feature type="sequence conflict" description="In Ref. 1; BAB23093." evidence="3" ref="1">
    <original>G</original>
    <variation>R</variation>
    <location>
        <position position="194"/>
    </location>
</feature>
<feature type="sequence conflict" description="In Ref. 1; BAB23093." evidence="3" ref="1">
    <original>W</original>
    <variation>L</variation>
    <location>
        <position position="304"/>
    </location>
</feature>
<protein>
    <recommendedName>
        <fullName evidence="1">Dehydrogenase/reductase SDR family member 1</fullName>
        <ecNumber evidence="1">1.1.1.-</ecNumber>
    </recommendedName>
    <alternativeName>
        <fullName evidence="1">Short chain dehydrogenase/reductase family 19C member 1</fullName>
        <shortName evidence="1">Protein SDR19C1</shortName>
    </alternativeName>
</protein>
<sequence length="313" mass="34005">MVAPMKGQVCVVTGASRGIGRGIALQLCKAGATVYITGRHLDTLRATAQEAQSLGGRCVPVVCDSSQESEVKSLFEQVDREQKGRLDVLVNNAYAGVQAILNTTNKSFWEVPASIWDDINNVGLRGHYLCSVYGARLMVPAGKGLIVIVSSPGGLQHMFNVPYGVGKAACDRLAADCAHELRRHGVSYVSLWPGLVQTEMVKEFMAKEDTPEDPLFKKMKPDFSSAESPEMSGKCVVALATDPNILNLSGKVLPSCDLARRYGLKDIDGRPVKDYFSLGYALSQVSSLGWLNSFLPGFLRVPKWVVTLYNSKF</sequence>
<proteinExistence type="evidence at protein level"/>
<name>DHRS1_MOUSE</name>
<dbReference type="EC" id="1.1.1.-" evidence="1"/>
<dbReference type="EMBL" id="AK003958">
    <property type="protein sequence ID" value="BAB23093.1"/>
    <property type="molecule type" value="mRNA"/>
</dbReference>
<dbReference type="EMBL" id="AK146317">
    <property type="protein sequence ID" value="BAE27072.1"/>
    <property type="molecule type" value="mRNA"/>
</dbReference>
<dbReference type="EMBL" id="AK168115">
    <property type="protein sequence ID" value="BAE40086.1"/>
    <property type="molecule type" value="mRNA"/>
</dbReference>
<dbReference type="EMBL" id="AK168147">
    <property type="protein sequence ID" value="BAE40112.1"/>
    <property type="molecule type" value="mRNA"/>
</dbReference>
<dbReference type="EMBL" id="BC003930">
    <property type="protein sequence ID" value="AAH03930.1"/>
    <property type="molecule type" value="mRNA"/>
</dbReference>
<dbReference type="CCDS" id="CCDS36934.1"/>
<dbReference type="RefSeq" id="NP_081095.2">
    <property type="nucleotide sequence ID" value="NM_026819.3"/>
</dbReference>
<dbReference type="RefSeq" id="XP_030103746.1">
    <property type="nucleotide sequence ID" value="XM_030247886.1"/>
</dbReference>
<dbReference type="RefSeq" id="XP_036014645.1">
    <property type="nucleotide sequence ID" value="XM_036158752.1"/>
</dbReference>
<dbReference type="SMR" id="Q99L04"/>
<dbReference type="BioGRID" id="206675">
    <property type="interactions" value="9"/>
</dbReference>
<dbReference type="FunCoup" id="Q99L04">
    <property type="interactions" value="807"/>
</dbReference>
<dbReference type="STRING" id="10090.ENSMUSP00000002403"/>
<dbReference type="GlyGen" id="Q99L04">
    <property type="glycosylation" value="1 site, 1 O-linked glycan (1 site)"/>
</dbReference>
<dbReference type="iPTMnet" id="Q99L04"/>
<dbReference type="PhosphoSitePlus" id="Q99L04"/>
<dbReference type="SwissPalm" id="Q99L04"/>
<dbReference type="jPOST" id="Q99L04"/>
<dbReference type="PaxDb" id="10090-ENSMUSP00000002403"/>
<dbReference type="PeptideAtlas" id="Q99L04"/>
<dbReference type="ProteomicsDB" id="277450"/>
<dbReference type="Pumba" id="Q99L04"/>
<dbReference type="Antibodypedia" id="23">
    <property type="antibodies" value="161 antibodies from 27 providers"/>
</dbReference>
<dbReference type="DNASU" id="52585"/>
<dbReference type="Ensembl" id="ENSMUST00000002403.10">
    <property type="protein sequence ID" value="ENSMUSP00000002403.9"/>
    <property type="gene ID" value="ENSMUSG00000002332.17"/>
</dbReference>
<dbReference type="GeneID" id="52585"/>
<dbReference type="KEGG" id="mmu:52585"/>
<dbReference type="UCSC" id="uc007uan.2">
    <property type="organism name" value="mouse"/>
</dbReference>
<dbReference type="AGR" id="MGI:1196314"/>
<dbReference type="CTD" id="115817"/>
<dbReference type="MGI" id="MGI:1196314">
    <property type="gene designation" value="Dhrs1"/>
</dbReference>
<dbReference type="VEuPathDB" id="HostDB:ENSMUSG00000002332"/>
<dbReference type="eggNOG" id="KOG0725">
    <property type="taxonomic scope" value="Eukaryota"/>
</dbReference>
<dbReference type="GeneTree" id="ENSGT00940000157797"/>
<dbReference type="HOGENOM" id="CLU_010194_14_1_1"/>
<dbReference type="InParanoid" id="Q99L04"/>
<dbReference type="OMA" id="QVYGFTD"/>
<dbReference type="PhylomeDB" id="Q99L04"/>
<dbReference type="TreeFam" id="TF314146"/>
<dbReference type="BioGRID-ORCS" id="52585">
    <property type="hits" value="3 hits in 79 CRISPR screens"/>
</dbReference>
<dbReference type="ChiTaRS" id="Dhrs1">
    <property type="organism name" value="mouse"/>
</dbReference>
<dbReference type="PRO" id="PR:Q99L04"/>
<dbReference type="Proteomes" id="UP000000589">
    <property type="component" value="Chromosome 14"/>
</dbReference>
<dbReference type="RNAct" id="Q99L04">
    <property type="molecule type" value="protein"/>
</dbReference>
<dbReference type="Bgee" id="ENSMUSG00000002332">
    <property type="expression patterns" value="Expressed in ciliary body and 258 other cell types or tissues"/>
</dbReference>
<dbReference type="GO" id="GO:0005783">
    <property type="term" value="C:endoplasmic reticulum"/>
    <property type="evidence" value="ECO:0007669"/>
    <property type="project" value="UniProtKB-SubCell"/>
</dbReference>
<dbReference type="GO" id="GO:0005743">
    <property type="term" value="C:mitochondrial inner membrane"/>
    <property type="evidence" value="ECO:0007005"/>
    <property type="project" value="MGI"/>
</dbReference>
<dbReference type="GO" id="GO:0005739">
    <property type="term" value="C:mitochondrion"/>
    <property type="evidence" value="ECO:0007005"/>
    <property type="project" value="MGI"/>
</dbReference>
<dbReference type="GO" id="GO:0004090">
    <property type="term" value="F:carbonyl reductase (NADPH) activity"/>
    <property type="evidence" value="ECO:0000250"/>
    <property type="project" value="UniProtKB"/>
</dbReference>
<dbReference type="GO" id="GO:0047881">
    <property type="term" value="F:estradiol 17-alpha-dehydrogenase [NAD(P)+] activity"/>
    <property type="evidence" value="ECO:0007669"/>
    <property type="project" value="RHEA"/>
</dbReference>
<dbReference type="GO" id="GO:0016616">
    <property type="term" value="F:oxidoreductase activity, acting on the CH-OH group of donors, NAD or NADP as acceptor"/>
    <property type="evidence" value="ECO:0000250"/>
    <property type="project" value="UniProtKB"/>
</dbReference>
<dbReference type="GO" id="GO:0047045">
    <property type="term" value="F:testosterone 17-beta-dehydrogenase (NADP+) activity"/>
    <property type="evidence" value="ECO:0007669"/>
    <property type="project" value="RHEA"/>
</dbReference>
<dbReference type="CDD" id="cd09763">
    <property type="entry name" value="DHRS1-like_SDR_c"/>
    <property type="match status" value="1"/>
</dbReference>
<dbReference type="FunFam" id="3.40.50.720:FF:000459">
    <property type="entry name" value="Dehydrogenase/reductase SDR family member 1"/>
    <property type="match status" value="1"/>
</dbReference>
<dbReference type="Gene3D" id="3.40.50.720">
    <property type="entry name" value="NAD(P)-binding Rossmann-like Domain"/>
    <property type="match status" value="1"/>
</dbReference>
<dbReference type="InterPro" id="IPR036291">
    <property type="entry name" value="NAD(P)-bd_dom_sf"/>
</dbReference>
<dbReference type="InterPro" id="IPR002347">
    <property type="entry name" value="SDR_fam"/>
</dbReference>
<dbReference type="PANTHER" id="PTHR44147">
    <property type="entry name" value="DEHYDROGENASE/REDUCTASE SDR FAMILY MEMBER 1"/>
    <property type="match status" value="1"/>
</dbReference>
<dbReference type="PANTHER" id="PTHR44147:SF2">
    <property type="entry name" value="DEHYDROGENASE_REDUCTASE SDR FAMILY MEMBER 1"/>
    <property type="match status" value="1"/>
</dbReference>
<dbReference type="Pfam" id="PF00106">
    <property type="entry name" value="adh_short"/>
    <property type="match status" value="1"/>
</dbReference>
<dbReference type="PRINTS" id="PR00081">
    <property type="entry name" value="GDHRDH"/>
</dbReference>
<dbReference type="SUPFAM" id="SSF51735">
    <property type="entry name" value="NAD(P)-binding Rossmann-fold domains"/>
    <property type="match status" value="1"/>
</dbReference>
<keyword id="KW-0256">Endoplasmic reticulum</keyword>
<keyword id="KW-0488">Methylation</keyword>
<keyword id="KW-0520">NAD</keyword>
<keyword id="KW-0560">Oxidoreductase</keyword>
<keyword id="KW-1185">Reference proteome</keyword>
<comment type="function">
    <text evidence="1">NADPH-dependent oxidoreductase which catalyzes the reduction of some steroids (estrone, androstene-3,17-dione and cortisone) as well as prostaglandin E1, isatin and xenobiotics in vitro. May have a role in steroid and/or xenobiotic metabolism.</text>
</comment>
<comment type="catalytic activity">
    <reaction evidence="1">
        <text>17alpha-estradiol + NADP(+) = estrone + NADPH + H(+)</text>
        <dbReference type="Rhea" id="RHEA:16705"/>
        <dbReference type="ChEBI" id="CHEBI:15378"/>
        <dbReference type="ChEBI" id="CHEBI:17160"/>
        <dbReference type="ChEBI" id="CHEBI:17263"/>
        <dbReference type="ChEBI" id="CHEBI:57783"/>
        <dbReference type="ChEBI" id="CHEBI:58349"/>
    </reaction>
    <physiologicalReaction direction="right-to-left" evidence="1">
        <dbReference type="Rhea" id="RHEA:16707"/>
    </physiologicalReaction>
</comment>
<comment type="catalytic activity">
    <reaction evidence="1">
        <text>testosterone + NADP(+) = androst-4-ene-3,17-dione + NADPH + H(+)</text>
        <dbReference type="Rhea" id="RHEA:14981"/>
        <dbReference type="ChEBI" id="CHEBI:15378"/>
        <dbReference type="ChEBI" id="CHEBI:16422"/>
        <dbReference type="ChEBI" id="CHEBI:17347"/>
        <dbReference type="ChEBI" id="CHEBI:57783"/>
        <dbReference type="ChEBI" id="CHEBI:58349"/>
    </reaction>
    <physiologicalReaction direction="right-to-left" evidence="1">
        <dbReference type="Rhea" id="RHEA:14983"/>
    </physiologicalReaction>
</comment>
<comment type="catalytic activity">
    <reaction evidence="1">
        <text>prostaglandin E1 + NADPH + H(+) = prostaglandin F1 + NADP(+)</text>
        <dbReference type="Rhea" id="RHEA:68612"/>
        <dbReference type="ChEBI" id="CHEBI:15378"/>
        <dbReference type="ChEBI" id="CHEBI:57397"/>
        <dbReference type="ChEBI" id="CHEBI:57783"/>
        <dbReference type="ChEBI" id="CHEBI:58349"/>
        <dbReference type="ChEBI" id="CHEBI:178049"/>
    </reaction>
    <physiologicalReaction direction="left-to-right" evidence="1">
        <dbReference type="Rhea" id="RHEA:68613"/>
    </physiologicalReaction>
</comment>
<comment type="catalytic activity">
    <reaction evidence="1">
        <text>isatin + NADPH + H(+) = 3-hydroxyindolin-2-one + NADP(+)</text>
        <dbReference type="Rhea" id="RHEA:68608"/>
        <dbReference type="ChEBI" id="CHEBI:15378"/>
        <dbReference type="ChEBI" id="CHEBI:27539"/>
        <dbReference type="ChEBI" id="CHEBI:28536"/>
        <dbReference type="ChEBI" id="CHEBI:57783"/>
        <dbReference type="ChEBI" id="CHEBI:58349"/>
    </reaction>
    <physiologicalReaction direction="left-to-right" evidence="1">
        <dbReference type="Rhea" id="RHEA:68609"/>
    </physiologicalReaction>
</comment>
<comment type="subcellular location">
    <subcellularLocation>
        <location evidence="1">Endoplasmic reticulum</location>
    </subcellularLocation>
    <text evidence="1">May be attached to the ER membrane by its C-terminus segment.</text>
</comment>
<comment type="domain">
    <text evidence="1">May be attached to the ER membrane by its C-terminus segment.</text>
</comment>
<comment type="similarity">
    <text evidence="3">Belongs to the short-chain dehydrogenases/reductases (SDR) family.</text>
</comment>
<organism>
    <name type="scientific">Mus musculus</name>
    <name type="common">Mouse</name>
    <dbReference type="NCBI Taxonomy" id="10090"/>
    <lineage>
        <taxon>Eukaryota</taxon>
        <taxon>Metazoa</taxon>
        <taxon>Chordata</taxon>
        <taxon>Craniata</taxon>
        <taxon>Vertebrata</taxon>
        <taxon>Euteleostomi</taxon>
        <taxon>Mammalia</taxon>
        <taxon>Eutheria</taxon>
        <taxon>Euarchontoglires</taxon>
        <taxon>Glires</taxon>
        <taxon>Rodentia</taxon>
        <taxon>Myomorpha</taxon>
        <taxon>Muroidea</taxon>
        <taxon>Muridae</taxon>
        <taxon>Murinae</taxon>
        <taxon>Mus</taxon>
        <taxon>Mus</taxon>
    </lineage>
</organism>
<evidence type="ECO:0000250" key="1">
    <source>
        <dbReference type="UniProtKB" id="Q96LJ7"/>
    </source>
</evidence>
<evidence type="ECO:0000250" key="2">
    <source>
        <dbReference type="UniProtKB" id="Q99714"/>
    </source>
</evidence>
<evidence type="ECO:0000305" key="3"/>
<evidence type="ECO:0000312" key="4">
    <source>
        <dbReference type="MGI" id="MGI:1196314"/>
    </source>
</evidence>
<evidence type="ECO:0007744" key="5">
    <source>
    </source>
</evidence>